<dbReference type="EMBL" id="AE008384">
    <property type="protein sequence ID" value="AAM31253.1"/>
    <property type="molecule type" value="Genomic_DNA"/>
</dbReference>
<dbReference type="RefSeq" id="WP_011033503.1">
    <property type="nucleotide sequence ID" value="NC_003901.1"/>
</dbReference>
<dbReference type="SMR" id="Q8PWM7"/>
<dbReference type="KEGG" id="mma:MM_1557"/>
<dbReference type="PATRIC" id="fig|192952.21.peg.1801"/>
<dbReference type="eggNOG" id="arCOG01217">
    <property type="taxonomic scope" value="Archaea"/>
</dbReference>
<dbReference type="HOGENOM" id="CLU_169299_1_0_2"/>
<dbReference type="Proteomes" id="UP000000595">
    <property type="component" value="Chromosome"/>
</dbReference>
<dbReference type="GO" id="GO:0048500">
    <property type="term" value="C:signal recognition particle"/>
    <property type="evidence" value="ECO:0007669"/>
    <property type="project" value="UniProtKB-UniRule"/>
</dbReference>
<dbReference type="GO" id="GO:0008312">
    <property type="term" value="F:7S RNA binding"/>
    <property type="evidence" value="ECO:0007669"/>
    <property type="project" value="UniProtKB-UniRule"/>
</dbReference>
<dbReference type="GO" id="GO:0006617">
    <property type="term" value="P:SRP-dependent cotranslational protein targeting to membrane, signal sequence recognition"/>
    <property type="evidence" value="ECO:0007669"/>
    <property type="project" value="TreeGrafter"/>
</dbReference>
<dbReference type="Gene3D" id="3.30.56.30">
    <property type="entry name" value="Signal recognition particle, SRP19-like subunit"/>
    <property type="match status" value="1"/>
</dbReference>
<dbReference type="HAMAP" id="MF_00305">
    <property type="entry name" value="SRP19"/>
    <property type="match status" value="1"/>
</dbReference>
<dbReference type="InterPro" id="IPR002778">
    <property type="entry name" value="Signal_recog_particle_SRP19"/>
</dbReference>
<dbReference type="InterPro" id="IPR036521">
    <property type="entry name" value="SRP19-like_sf"/>
</dbReference>
<dbReference type="InterPro" id="IPR022938">
    <property type="entry name" value="SRP19_arc-type"/>
</dbReference>
<dbReference type="NCBIfam" id="NF001973">
    <property type="entry name" value="PRK00754.1"/>
    <property type="match status" value="1"/>
</dbReference>
<dbReference type="PANTHER" id="PTHR17453">
    <property type="entry name" value="SIGNAL RECOGNITION PARTICLE 19 KD PROTEIN"/>
    <property type="match status" value="1"/>
</dbReference>
<dbReference type="PANTHER" id="PTHR17453:SF0">
    <property type="entry name" value="SIGNAL RECOGNITION PARTICLE 19 KDA PROTEIN"/>
    <property type="match status" value="1"/>
</dbReference>
<dbReference type="Pfam" id="PF01922">
    <property type="entry name" value="SRP19"/>
    <property type="match status" value="1"/>
</dbReference>
<dbReference type="SUPFAM" id="SSF69695">
    <property type="entry name" value="SRP19"/>
    <property type="match status" value="1"/>
</dbReference>
<evidence type="ECO:0000255" key="1">
    <source>
        <dbReference type="HAMAP-Rule" id="MF_00305"/>
    </source>
</evidence>
<proteinExistence type="inferred from homology"/>
<protein>
    <recommendedName>
        <fullName evidence="1">Signal recognition particle 19 kDa protein</fullName>
        <shortName evidence="1">SRP19</shortName>
    </recommendedName>
</protein>
<accession>Q8PWM7</accession>
<name>SRP19_METMA</name>
<sequence>MKDKGKLVIWPAYIDQTKSRSSGRIISRKNSIKEPHLNEIKEAARQLGLNPEVEPEKAYPKSWWEVSGRVLVDDNGPKSVIAKQIALAIKKMRGQEVPAKT</sequence>
<keyword id="KW-0963">Cytoplasm</keyword>
<keyword id="KW-0687">Ribonucleoprotein</keyword>
<keyword id="KW-0694">RNA-binding</keyword>
<keyword id="KW-0733">Signal recognition particle</keyword>
<feature type="chain" id="PRO_0000135219" description="Signal recognition particle 19 kDa protein">
    <location>
        <begin position="1"/>
        <end position="101"/>
    </location>
</feature>
<gene>
    <name evidence="1" type="primary">srp19</name>
    <name type="ordered locus">MM_1557</name>
</gene>
<organism>
    <name type="scientific">Methanosarcina mazei (strain ATCC BAA-159 / DSM 3647 / Goe1 / Go1 / JCM 11833 / OCM 88)</name>
    <name type="common">Methanosarcina frisia</name>
    <dbReference type="NCBI Taxonomy" id="192952"/>
    <lineage>
        <taxon>Archaea</taxon>
        <taxon>Methanobacteriati</taxon>
        <taxon>Methanobacteriota</taxon>
        <taxon>Stenosarchaea group</taxon>
        <taxon>Methanomicrobia</taxon>
        <taxon>Methanosarcinales</taxon>
        <taxon>Methanosarcinaceae</taxon>
        <taxon>Methanosarcina</taxon>
    </lineage>
</organism>
<reference key="1">
    <citation type="journal article" date="2002" name="J. Mol. Microbiol. Biotechnol.">
        <title>The genome of Methanosarcina mazei: evidence for lateral gene transfer between Bacteria and Archaea.</title>
        <authorList>
            <person name="Deppenmeier U."/>
            <person name="Johann A."/>
            <person name="Hartsch T."/>
            <person name="Merkl R."/>
            <person name="Schmitz R.A."/>
            <person name="Martinez-Arias R."/>
            <person name="Henne A."/>
            <person name="Wiezer A."/>
            <person name="Baeumer S."/>
            <person name="Jacobi C."/>
            <person name="Brueggemann H."/>
            <person name="Lienard T."/>
            <person name="Christmann A."/>
            <person name="Boemecke M."/>
            <person name="Steckel S."/>
            <person name="Bhattacharyya A."/>
            <person name="Lykidis A."/>
            <person name="Overbeek R."/>
            <person name="Klenk H.-P."/>
            <person name="Gunsalus R.P."/>
            <person name="Fritz H.-J."/>
            <person name="Gottschalk G."/>
        </authorList>
    </citation>
    <scope>NUCLEOTIDE SEQUENCE [LARGE SCALE GENOMIC DNA]</scope>
    <source>
        <strain>ATCC BAA-159 / DSM 3647 / Goe1 / Go1 / JCM 11833 / OCM 88</strain>
    </source>
</reference>
<comment type="function">
    <text evidence="1">Involved in targeting and insertion of nascent membrane proteins into the cytoplasmic membrane. Binds directly to 7S RNA and mediates binding of the 54 kDa subunit of the SRP.</text>
</comment>
<comment type="subunit">
    <text evidence="1">Part of the signal recognition particle protein translocation system, which is composed of SRP and FtsY. Archaeal SRP consists of a 7S RNA molecule of 300 nucleotides and two protein subunits: SRP54 and SRP19.</text>
</comment>
<comment type="subcellular location">
    <subcellularLocation>
        <location evidence="1">Cytoplasm</location>
    </subcellularLocation>
</comment>
<comment type="similarity">
    <text evidence="1">Belongs to the SRP19 family.</text>
</comment>